<sequence>MEWSQELWLLIKYLLLGLFQGFTEPIPVSSSGHLVLLQHFLGIEIEGLSFEVMVNFASLFAVIAIYRFDLLKLVKGSARYVLYQDAQGKGDFRISFYLLLATVPAVLAALLFKDWIETELKQLHVIAFALLITGMALWLIRHLNGRKQDGDITLKDALLVGLAQTAALIPGISRSGATIVAAMGLGWRQETALRFSFFLYIPISLGSGVLAISDIVQDPHFTALWIPYTIAFIGSFIASYVSLLWFMNIMRHGKLIYFALYCWLAGLIVLSLLS</sequence>
<proteinExistence type="inferred from homology"/>
<evidence type="ECO:0000255" key="1">
    <source>
        <dbReference type="HAMAP-Rule" id="MF_01006"/>
    </source>
</evidence>
<protein>
    <recommendedName>
        <fullName evidence="1">Undecaprenyl-diphosphatase 1</fullName>
        <ecNumber evidence="1">3.6.1.27</ecNumber>
    </recommendedName>
    <alternativeName>
        <fullName evidence="1">Bacitracin resistance protein 1</fullName>
    </alternativeName>
    <alternativeName>
        <fullName evidence="1">Undecaprenyl pyrophosphate phosphatase 1</fullName>
    </alternativeName>
</protein>
<dbReference type="EC" id="3.6.1.27" evidence="1"/>
<dbReference type="EMBL" id="BA000004">
    <property type="protein sequence ID" value="BAB04183.1"/>
    <property type="molecule type" value="Genomic_DNA"/>
</dbReference>
<dbReference type="PIR" id="H83707">
    <property type="entry name" value="H83707"/>
</dbReference>
<dbReference type="RefSeq" id="WP_010896642.1">
    <property type="nucleotide sequence ID" value="NC_002570.2"/>
</dbReference>
<dbReference type="SMR" id="Q9KFL5"/>
<dbReference type="STRING" id="272558.gene:10726317"/>
<dbReference type="KEGG" id="bha:BH0464"/>
<dbReference type="eggNOG" id="COG1968">
    <property type="taxonomic scope" value="Bacteria"/>
</dbReference>
<dbReference type="HOGENOM" id="CLU_060296_1_2_9"/>
<dbReference type="OrthoDB" id="9808289at2"/>
<dbReference type="Proteomes" id="UP000001258">
    <property type="component" value="Chromosome"/>
</dbReference>
<dbReference type="GO" id="GO:0005886">
    <property type="term" value="C:plasma membrane"/>
    <property type="evidence" value="ECO:0007669"/>
    <property type="project" value="UniProtKB-SubCell"/>
</dbReference>
<dbReference type="GO" id="GO:0050380">
    <property type="term" value="F:undecaprenyl-diphosphatase activity"/>
    <property type="evidence" value="ECO:0007669"/>
    <property type="project" value="UniProtKB-UniRule"/>
</dbReference>
<dbReference type="GO" id="GO:0071555">
    <property type="term" value="P:cell wall organization"/>
    <property type="evidence" value="ECO:0007669"/>
    <property type="project" value="UniProtKB-KW"/>
</dbReference>
<dbReference type="GO" id="GO:0009252">
    <property type="term" value="P:peptidoglycan biosynthetic process"/>
    <property type="evidence" value="ECO:0007669"/>
    <property type="project" value="UniProtKB-KW"/>
</dbReference>
<dbReference type="GO" id="GO:0008360">
    <property type="term" value="P:regulation of cell shape"/>
    <property type="evidence" value="ECO:0007669"/>
    <property type="project" value="UniProtKB-KW"/>
</dbReference>
<dbReference type="GO" id="GO:0046677">
    <property type="term" value="P:response to antibiotic"/>
    <property type="evidence" value="ECO:0007669"/>
    <property type="project" value="UniProtKB-UniRule"/>
</dbReference>
<dbReference type="HAMAP" id="MF_01006">
    <property type="entry name" value="Undec_diphosphatase"/>
    <property type="match status" value="1"/>
</dbReference>
<dbReference type="InterPro" id="IPR003824">
    <property type="entry name" value="UppP"/>
</dbReference>
<dbReference type="PANTHER" id="PTHR30622">
    <property type="entry name" value="UNDECAPRENYL-DIPHOSPHATASE"/>
    <property type="match status" value="1"/>
</dbReference>
<dbReference type="PANTHER" id="PTHR30622:SF2">
    <property type="entry name" value="UNDECAPRENYL-DIPHOSPHATASE"/>
    <property type="match status" value="1"/>
</dbReference>
<dbReference type="Pfam" id="PF02673">
    <property type="entry name" value="BacA"/>
    <property type="match status" value="1"/>
</dbReference>
<keyword id="KW-0046">Antibiotic resistance</keyword>
<keyword id="KW-1003">Cell membrane</keyword>
<keyword id="KW-0133">Cell shape</keyword>
<keyword id="KW-0961">Cell wall biogenesis/degradation</keyword>
<keyword id="KW-0378">Hydrolase</keyword>
<keyword id="KW-0472">Membrane</keyword>
<keyword id="KW-0573">Peptidoglycan synthesis</keyword>
<keyword id="KW-1185">Reference proteome</keyword>
<keyword id="KW-0812">Transmembrane</keyword>
<keyword id="KW-1133">Transmembrane helix</keyword>
<comment type="function">
    <text evidence="1">Catalyzes the dephosphorylation of undecaprenyl diphosphate (UPP). Confers resistance to bacitracin.</text>
</comment>
<comment type="catalytic activity">
    <reaction evidence="1">
        <text>di-trans,octa-cis-undecaprenyl diphosphate + H2O = di-trans,octa-cis-undecaprenyl phosphate + phosphate + H(+)</text>
        <dbReference type="Rhea" id="RHEA:28094"/>
        <dbReference type="ChEBI" id="CHEBI:15377"/>
        <dbReference type="ChEBI" id="CHEBI:15378"/>
        <dbReference type="ChEBI" id="CHEBI:43474"/>
        <dbReference type="ChEBI" id="CHEBI:58405"/>
        <dbReference type="ChEBI" id="CHEBI:60392"/>
        <dbReference type="EC" id="3.6.1.27"/>
    </reaction>
</comment>
<comment type="subcellular location">
    <subcellularLocation>
        <location evidence="1">Cell membrane</location>
        <topology evidence="1">Multi-pass membrane protein</topology>
    </subcellularLocation>
</comment>
<comment type="miscellaneous">
    <text>Bacitracin is thought to be involved in the inhibition of peptidoglycan synthesis by sequestering undecaprenyl diphosphate, thereby reducing the pool of lipid carrier available.</text>
</comment>
<comment type="similarity">
    <text evidence="1">Belongs to the UppP family.</text>
</comment>
<gene>
    <name evidence="1" type="primary">uppP1</name>
    <name type="synonym">bacA1</name>
    <name type="synonym">upk1</name>
    <name type="ordered locus">BH0464</name>
</gene>
<feature type="chain" id="PRO_0000151099" description="Undecaprenyl-diphosphatase 1">
    <location>
        <begin position="1"/>
        <end position="274"/>
    </location>
</feature>
<feature type="transmembrane region" description="Helical" evidence="1">
    <location>
        <begin position="8"/>
        <end position="28"/>
    </location>
</feature>
<feature type="transmembrane region" description="Helical" evidence="1">
    <location>
        <begin position="45"/>
        <end position="65"/>
    </location>
</feature>
<feature type="transmembrane region" description="Helical" evidence="1">
    <location>
        <begin position="92"/>
        <end position="112"/>
    </location>
</feature>
<feature type="transmembrane region" description="Helical" evidence="1">
    <location>
        <begin position="120"/>
        <end position="140"/>
    </location>
</feature>
<feature type="transmembrane region" description="Helical" evidence="1">
    <location>
        <begin position="195"/>
        <end position="215"/>
    </location>
</feature>
<feature type="transmembrane region" description="Helical" evidence="1">
    <location>
        <begin position="230"/>
        <end position="250"/>
    </location>
</feature>
<feature type="transmembrane region" description="Helical" evidence="1">
    <location>
        <begin position="253"/>
        <end position="273"/>
    </location>
</feature>
<reference key="1">
    <citation type="journal article" date="2000" name="Nucleic Acids Res.">
        <title>Complete genome sequence of the alkaliphilic bacterium Bacillus halodurans and genomic sequence comparison with Bacillus subtilis.</title>
        <authorList>
            <person name="Takami H."/>
            <person name="Nakasone K."/>
            <person name="Takaki Y."/>
            <person name="Maeno G."/>
            <person name="Sasaki R."/>
            <person name="Masui N."/>
            <person name="Fuji F."/>
            <person name="Hirama C."/>
            <person name="Nakamura Y."/>
            <person name="Ogasawara N."/>
            <person name="Kuhara S."/>
            <person name="Horikoshi K."/>
        </authorList>
    </citation>
    <scope>NUCLEOTIDE SEQUENCE [LARGE SCALE GENOMIC DNA]</scope>
    <source>
        <strain>ATCC BAA-125 / DSM 18197 / FERM 7344 / JCM 9153 / C-125</strain>
    </source>
</reference>
<organism>
    <name type="scientific">Halalkalibacterium halodurans (strain ATCC BAA-125 / DSM 18197 / FERM 7344 / JCM 9153 / C-125)</name>
    <name type="common">Bacillus halodurans</name>
    <dbReference type="NCBI Taxonomy" id="272558"/>
    <lineage>
        <taxon>Bacteria</taxon>
        <taxon>Bacillati</taxon>
        <taxon>Bacillota</taxon>
        <taxon>Bacilli</taxon>
        <taxon>Bacillales</taxon>
        <taxon>Bacillaceae</taxon>
        <taxon>Halalkalibacterium (ex Joshi et al. 2022)</taxon>
    </lineage>
</organism>
<name>UPPP1_HALH5</name>
<accession>Q9KFL5</accession>